<dbReference type="EC" id="5.4.99.8"/>
<dbReference type="EMBL" id="AB055509">
    <property type="protein sequence ID" value="BAB83085.1"/>
    <property type="molecule type" value="mRNA"/>
</dbReference>
<dbReference type="SMR" id="Q8W3Z4"/>
<dbReference type="GO" id="GO:0005811">
    <property type="term" value="C:lipid droplet"/>
    <property type="evidence" value="ECO:0007669"/>
    <property type="project" value="InterPro"/>
</dbReference>
<dbReference type="GO" id="GO:0016871">
    <property type="term" value="F:cycloartenol synthase activity"/>
    <property type="evidence" value="ECO:0000314"/>
    <property type="project" value="UniProtKB"/>
</dbReference>
<dbReference type="GO" id="GO:0010686">
    <property type="term" value="P:tetracyclic triterpenoid biosynthetic process"/>
    <property type="evidence" value="ECO:0000314"/>
    <property type="project" value="UniProtKB"/>
</dbReference>
<dbReference type="CDD" id="cd02892">
    <property type="entry name" value="SQCY_1"/>
    <property type="match status" value="1"/>
</dbReference>
<dbReference type="FunFam" id="1.50.10.20:FF:000002">
    <property type="entry name" value="Terpene cyclase/mutase family member"/>
    <property type="match status" value="1"/>
</dbReference>
<dbReference type="FunFam" id="1.50.10.20:FF:000022">
    <property type="entry name" value="Terpene cyclase/mutase family member"/>
    <property type="match status" value="1"/>
</dbReference>
<dbReference type="Gene3D" id="1.50.10.20">
    <property type="match status" value="2"/>
</dbReference>
<dbReference type="InterPro" id="IPR032696">
    <property type="entry name" value="SQ_cyclase_C"/>
</dbReference>
<dbReference type="InterPro" id="IPR032697">
    <property type="entry name" value="SQ_cyclase_N"/>
</dbReference>
<dbReference type="InterPro" id="IPR018333">
    <property type="entry name" value="Squalene_cyclase"/>
</dbReference>
<dbReference type="InterPro" id="IPR002365">
    <property type="entry name" value="Terpene_synthase_CS"/>
</dbReference>
<dbReference type="InterPro" id="IPR008930">
    <property type="entry name" value="Terpenoid_cyclase/PrenylTrfase"/>
</dbReference>
<dbReference type="NCBIfam" id="TIGR01787">
    <property type="entry name" value="squalene_cyclas"/>
    <property type="match status" value="1"/>
</dbReference>
<dbReference type="PANTHER" id="PTHR11764">
    <property type="entry name" value="TERPENE CYCLASE/MUTASE FAMILY MEMBER"/>
    <property type="match status" value="1"/>
</dbReference>
<dbReference type="PANTHER" id="PTHR11764:SF85">
    <property type="entry name" value="TERPENE CYCLASE_MUTASE FAMILY MEMBER"/>
    <property type="match status" value="1"/>
</dbReference>
<dbReference type="Pfam" id="PF13243">
    <property type="entry name" value="SQHop_cyclase_C"/>
    <property type="match status" value="1"/>
</dbReference>
<dbReference type="Pfam" id="PF13249">
    <property type="entry name" value="SQHop_cyclase_N"/>
    <property type="match status" value="1"/>
</dbReference>
<dbReference type="SFLD" id="SFLDG01016">
    <property type="entry name" value="Prenyltransferase_Like_2"/>
    <property type="match status" value="1"/>
</dbReference>
<dbReference type="SUPFAM" id="SSF48239">
    <property type="entry name" value="Terpenoid cyclases/Protein prenyltransferases"/>
    <property type="match status" value="2"/>
</dbReference>
<dbReference type="PROSITE" id="PS01074">
    <property type="entry name" value="TERPENE_SYNTHASES"/>
    <property type="match status" value="1"/>
</dbReference>
<keyword id="KW-0413">Isomerase</keyword>
<keyword id="KW-0677">Repeat</keyword>
<evidence type="ECO:0000250" key="1">
    <source>
        <dbReference type="UniProtKB" id="P48449"/>
    </source>
</evidence>
<evidence type="ECO:0000256" key="2">
    <source>
        <dbReference type="SAM" id="MobiDB-lite"/>
    </source>
</evidence>
<evidence type="ECO:0000269" key="3">
    <source>
    </source>
</evidence>
<evidence type="ECO:0000305" key="4"/>
<feature type="chain" id="PRO_0000413990" description="Cycloartenol synthase">
    <location>
        <begin position="1"/>
        <end position="767"/>
    </location>
</feature>
<feature type="repeat" description="PFTB 1">
    <location>
        <begin position="158"/>
        <end position="199"/>
    </location>
</feature>
<feature type="repeat" description="PFTB 2">
    <location>
        <begin position="522"/>
        <end position="567"/>
    </location>
</feature>
<feature type="repeat" description="PFTB 3">
    <location>
        <begin position="599"/>
        <end position="639"/>
    </location>
</feature>
<feature type="repeat" description="PFTB 4">
    <location>
        <begin position="648"/>
        <end position="689"/>
    </location>
</feature>
<feature type="repeat" description="PFTB 5">
    <location>
        <begin position="710"/>
        <end position="751"/>
    </location>
</feature>
<feature type="region of interest" description="Disordered" evidence="2">
    <location>
        <begin position="1"/>
        <end position="22"/>
    </location>
</feature>
<feature type="active site" description="Proton donor" evidence="1">
    <location>
        <position position="493"/>
    </location>
</feature>
<protein>
    <recommendedName>
        <fullName>Cycloartenol synthase</fullName>
        <ecNumber>5.4.99.8</ecNumber>
    </recommendedName>
</protein>
<gene>
    <name type="primary">CASBPX1</name>
</gene>
<comment type="function">
    <text evidence="3">Oxidosqualene cyclase converting oxidosqualene to cycloartenol.</text>
</comment>
<comment type="catalytic activity">
    <reaction evidence="3">
        <text>(S)-2,3-epoxysqualene = cycloartenol</text>
        <dbReference type="Rhea" id="RHEA:21308"/>
        <dbReference type="ChEBI" id="CHEBI:15441"/>
        <dbReference type="ChEBI" id="CHEBI:17030"/>
        <dbReference type="EC" id="5.4.99.8"/>
    </reaction>
</comment>
<comment type="similarity">
    <text evidence="4">Belongs to the terpene cyclase/mutase family.</text>
</comment>
<name>CAS1_BETPL</name>
<proteinExistence type="evidence at protein level"/>
<reference key="1">
    <citation type="journal article" date="2003" name="Biol. Pharm. Bull.">
        <title>Oxidosqualene cyclases from cell suspension cultures of Betula platyphylla var. japonica: molecular evolution of oxidosqualene cyclases in higher plants.</title>
        <authorList>
            <person name="Zhang H."/>
            <person name="Shibuya M."/>
            <person name="Yokota S."/>
            <person name="Ebizuka Y."/>
        </authorList>
    </citation>
    <scope>NUCLEOTIDE SEQUENCE [MRNA]</scope>
    <scope>FUNCTION</scope>
    <scope>CATALYTIC ACTIVITY</scope>
</reference>
<sequence>MWKLKIGAETARGDGGGGGGSETWLRSLNNHLGRQIWEFHPELGTQEELQQIDDARRRFWERRFERRHSSDLLMRIQFAKENPSSANIPQVKIKDTEEVREEAVGMTLRRAINFYSTIQADDGHWPGDYGGPMFLIPGLVITLSITGTLNAFLSKEHQCEICRYLYNHQNEDGGWGLHIEGPSTMFGTALNYITLRLLGEPEDGMGAVEKARKWILDHGGATAITSWGKMWLSVLGVYEWSGNNPLPPEVWLCPYLLPCHPGRMWCHCRMVYLPMSYLYGKRFVGPITSTIQSLRKELYTVPYHEIDWNKARNDCAKEDLYYPHPLVQDILWASLYYAYEPIFMYWPAKRLREKALDTVMQHIHYEDENTRYICIGPVNKVLNMLCCWAEDPNSEAFKLHLPRILDYLWIAEDGMKMQGYNGSQLWDTTFAVQAIISTNIAEEYGQTLRKAHEYIKDSQVLEDCPGDLNFWYRHISKGAWPFSTADHGWPISDCTAEGLKAVILLSQFPSETVGKSVDVKRLYDAVHVILSLQNTDGGFATYELTRSYHWLELINPAETFGDIVIDYPYVECTSAAIQALTLFKKLHPGHRREEIENCIAKAAEFIENIQASDGSWYGSWGVCFTYAGWFGIKGLVAAGRTYKNCSSIHKACDYLLSKELASGGWGESYLSCQDKVYTNLKDNRPHIVNTGWAMLALIDAGQAERDPTPLHRAARILINSQMENGDFPQEEIMGVFNKNCMISYSAYRNIFPIWALGEYRCRVLKAL</sequence>
<organism>
    <name type="scientific">Betula platyphylla</name>
    <name type="common">Asian white birch</name>
    <dbReference type="NCBI Taxonomy" id="78630"/>
    <lineage>
        <taxon>Eukaryota</taxon>
        <taxon>Viridiplantae</taxon>
        <taxon>Streptophyta</taxon>
        <taxon>Embryophyta</taxon>
        <taxon>Tracheophyta</taxon>
        <taxon>Spermatophyta</taxon>
        <taxon>Magnoliopsida</taxon>
        <taxon>eudicotyledons</taxon>
        <taxon>Gunneridae</taxon>
        <taxon>Pentapetalae</taxon>
        <taxon>rosids</taxon>
        <taxon>fabids</taxon>
        <taxon>Fagales</taxon>
        <taxon>Betulaceae</taxon>
        <taxon>Betula</taxon>
    </lineage>
</organism>
<accession>Q8W3Z4</accession>